<feature type="signal peptide" evidence="2">
    <location>
        <begin position="1"/>
        <end position="19"/>
    </location>
</feature>
<feature type="chain" id="PRO_0000385182" description="Spore wall protein 30">
    <location>
        <begin position="20"/>
        <end position="278"/>
    </location>
</feature>
<feature type="glycosylation site" description="N-linked (GlcNAc...) asparagine" evidence="1">
    <location>
        <position position="79"/>
    </location>
</feature>
<feature type="glycosylation site" description="N-linked (GlcNAc...) asparagine" evidence="1">
    <location>
        <position position="259"/>
    </location>
</feature>
<feature type="glycosylation site" description="N-linked (GlcNAc...) asparagine" evidence="1">
    <location>
        <position position="267"/>
    </location>
</feature>
<feature type="sequence conflict" description="In Ref. 3; AAF63521." evidence="3" ref="3">
    <original>Y</original>
    <variation>N</variation>
    <location>
        <position position="30"/>
    </location>
</feature>
<feature type="sequence conflict" description="In Ref. 3; AAF63521." evidence="3" ref="3">
    <original>I</original>
    <variation>V</variation>
    <location>
        <position position="130"/>
    </location>
</feature>
<keyword id="KW-0903">Direct protein sequencing</keyword>
<keyword id="KW-0325">Glycoprotein</keyword>
<keyword id="KW-1185">Reference proteome</keyword>
<keyword id="KW-0732">Signal</keyword>
<keyword id="KW-0749">Sporulation</keyword>
<gene>
    <name type="primary">SWP30</name>
    <name type="synonym">HSWP1</name>
    <name type="synonym">sap30.4</name>
    <name type="ORF">NBO_552g0005</name>
</gene>
<accession>B3STN5</accession>
<accession>Q9NGQ1</accession>
<accession>R0KPI3</accession>
<dbReference type="EMBL" id="EF683101">
    <property type="protein sequence ID" value="ABV48889.1"/>
    <property type="molecule type" value="Genomic_DNA"/>
</dbReference>
<dbReference type="EMBL" id="KB909459">
    <property type="protein sequence ID" value="EOB12097.1"/>
    <property type="molecule type" value="Genomic_DNA"/>
</dbReference>
<dbReference type="EMBL" id="AF245278">
    <property type="protein sequence ID" value="AAF63521.1"/>
    <property type="molecule type" value="mRNA"/>
</dbReference>
<dbReference type="GlyCosmos" id="B3STN5">
    <property type="glycosylation" value="3 sites, No reported glycans"/>
</dbReference>
<dbReference type="EnsemblFungi" id="EOB12097">
    <property type="protein sequence ID" value="EOB12097"/>
    <property type="gene ID" value="NBO_552g0005"/>
</dbReference>
<dbReference type="VEuPathDB" id="MicrosporidiaDB:NBO_552g0005"/>
<dbReference type="HOGENOM" id="CLU_1001487_0_0_1"/>
<dbReference type="OrthoDB" id="10628436at2759"/>
<dbReference type="Proteomes" id="UP000016927">
    <property type="component" value="Unassembled WGS sequence"/>
</dbReference>
<dbReference type="GO" id="GO:0031160">
    <property type="term" value="C:spore wall"/>
    <property type="evidence" value="ECO:0007669"/>
    <property type="project" value="UniProtKB-SubCell"/>
</dbReference>
<dbReference type="GO" id="GO:0030435">
    <property type="term" value="P:sporulation resulting in formation of a cellular spore"/>
    <property type="evidence" value="ECO:0007669"/>
    <property type="project" value="UniProtKB-KW"/>
</dbReference>
<organism>
    <name type="scientific">Nosema bombycis (strain CQ1 / CVCC 102059)</name>
    <name type="common">Microsporidian parasite</name>
    <name type="synonym">Pebrine of silkworm</name>
    <dbReference type="NCBI Taxonomy" id="578461"/>
    <lineage>
        <taxon>Eukaryota</taxon>
        <taxon>Fungi</taxon>
        <taxon>Fungi incertae sedis</taxon>
        <taxon>Microsporidia</taxon>
        <taxon>Nosematidae</taxon>
        <taxon>Nosema</taxon>
    </lineage>
</organism>
<comment type="subcellular location">
    <subcellularLocation>
        <location evidence="2">Spore wall</location>
    </subcellularLocation>
</comment>
<comment type="developmental stage">
    <text evidence="2">Synthesized during sporogony.</text>
</comment>
<name>SWP30_NOSB1</name>
<protein>
    <recommendedName>
        <fullName>Spore wall protein 30</fullName>
    </recommendedName>
    <alternativeName>
        <fullName>Surface-antigen protein P30.4</fullName>
    </alternativeName>
</protein>
<proteinExistence type="evidence at protein level"/>
<reference key="1">
    <citation type="journal article" date="2008" name="Proteomics">
        <title>Proteomic analysis of spore wall proteins and identification of two spore wall proteins from Nosema bombycis (Microsporidia).</title>
        <authorList>
            <person name="Wu Z."/>
            <person name="Li Y."/>
            <person name="Pan G."/>
            <person name="Tan X."/>
            <person name="Hu J."/>
            <person name="Zhou Z."/>
            <person name="Xiang Z."/>
        </authorList>
    </citation>
    <scope>NUCLEOTIDE SEQUENCE [GENOMIC DNA]</scope>
    <scope>PROTEIN SEQUENCE OF 20-30</scope>
    <scope>IDENTIFICATION BY MASS SPECTROMETRY</scope>
    <scope>SUBCELLULAR LOCATION</scope>
    <scope>DEVELOPMENTAL STAGE</scope>
    <source>
        <strain>CQ1 / CVCC 102059</strain>
    </source>
</reference>
<reference key="2">
    <citation type="journal article" date="2013" name="BMC Genomics">
        <title>Comparative genomics of parasitic silkworm microsporidia reveal an association between genome expansion and host adaptation.</title>
        <authorList>
            <person name="Pan G."/>
            <person name="Xu J."/>
            <person name="Li T."/>
            <person name="Xia Q."/>
            <person name="Liu S.L."/>
            <person name="Zhang G."/>
            <person name="Li S."/>
            <person name="Li C."/>
            <person name="Liu H."/>
            <person name="Yang L."/>
            <person name="Liu T."/>
            <person name="Zhang X."/>
            <person name="Wu Z."/>
            <person name="Fan W."/>
            <person name="Dang X."/>
            <person name="Xiang H."/>
            <person name="Tao M."/>
            <person name="Li Y."/>
            <person name="Hu J."/>
            <person name="Li Z."/>
            <person name="Lin L."/>
            <person name="Luo J."/>
            <person name="Geng L."/>
            <person name="Wang L."/>
            <person name="Long M."/>
            <person name="Wan Y."/>
            <person name="He N."/>
            <person name="Zhang Z."/>
            <person name="Lu C."/>
            <person name="Keeling P.J."/>
            <person name="Wang J."/>
            <person name="Xiang Z."/>
            <person name="Zhou Z."/>
        </authorList>
    </citation>
    <scope>NUCLEOTIDE SEQUENCE [LARGE SCALE GENOMIC DNA]</scope>
    <source>
        <strain>CQ1 / CVCC 102059</strain>
    </source>
</reference>
<reference key="3">
    <citation type="submission" date="2000-03" db="EMBL/GenBank/DDBJ databases">
        <title>Cloning of the surface-antigen protein of Nosema bombycis.</title>
        <authorList>
            <person name="Zhou Z.Y."/>
            <person name="Cui H.J."/>
            <person name="Xiang Z.H."/>
        </authorList>
    </citation>
    <scope>NUCLEOTIDE SEQUENCE [MRNA] OF 23-278</scope>
    <source>
        <strain>CQ1 / CVCC 102059</strain>
    </source>
</reference>
<sequence length="278" mass="32094">MNILLATASFVLSLGFVKAEPTRHHDRYAYIERVVCDVNFPDLLCRRKSHAIAYRMFRLIPVRNPNYEISTDYVSHEFNTTRVRSESEKYLCSSYGPNGYVSGDVFILRNALNKLFDHHEIEELAYELFIRLVASFLDSCSYPKSFEHNLVRCRSEDEELCTSPLAAFIKLVSRRSTRDVVLIVLNDFSHYLKLEEGHGFSKDRKSNQCVKFTQLYFYYLSAAVNFIERKISAFTLIPVMDDRRIASVSAIMISSKFANTTGNYVINATSFMDNTIPF</sequence>
<evidence type="ECO:0000255" key="1"/>
<evidence type="ECO:0000269" key="2">
    <source>
    </source>
</evidence>
<evidence type="ECO:0000305" key="3"/>